<sequence>MNVQHKLVLASGSPRRIELLGQAGIEPDRIHPADIDETPQRAEHPRSLARRLSRDKARKAHEQLQGEAGFSGALVLAADTVVAVGRRILPKAEIEDEARECLRLLSGRTHKVFTGVCLVLPNGNLRQTLVETRLRFERLSRLQINAYLSSGEWRGKAGGYAIQGLAGSFVVKLVGSYTNVVGLPLQETVGLLADGGYPVYANWGTGKV</sequence>
<comment type="function">
    <text evidence="1">Nucleoside triphosphate pyrophosphatase that hydrolyzes dTTP and UTP. May have a dual role in cell division arrest and in preventing the incorporation of modified nucleotides into cellular nucleic acids.</text>
</comment>
<comment type="catalytic activity">
    <reaction evidence="1">
        <text>dTTP + H2O = dTMP + diphosphate + H(+)</text>
        <dbReference type="Rhea" id="RHEA:28534"/>
        <dbReference type="ChEBI" id="CHEBI:15377"/>
        <dbReference type="ChEBI" id="CHEBI:15378"/>
        <dbReference type="ChEBI" id="CHEBI:33019"/>
        <dbReference type="ChEBI" id="CHEBI:37568"/>
        <dbReference type="ChEBI" id="CHEBI:63528"/>
        <dbReference type="EC" id="3.6.1.9"/>
    </reaction>
</comment>
<comment type="catalytic activity">
    <reaction evidence="1">
        <text>UTP + H2O = UMP + diphosphate + H(+)</text>
        <dbReference type="Rhea" id="RHEA:29395"/>
        <dbReference type="ChEBI" id="CHEBI:15377"/>
        <dbReference type="ChEBI" id="CHEBI:15378"/>
        <dbReference type="ChEBI" id="CHEBI:33019"/>
        <dbReference type="ChEBI" id="CHEBI:46398"/>
        <dbReference type="ChEBI" id="CHEBI:57865"/>
        <dbReference type="EC" id="3.6.1.9"/>
    </reaction>
</comment>
<comment type="cofactor">
    <cofactor evidence="1">
        <name>a divalent metal cation</name>
        <dbReference type="ChEBI" id="CHEBI:60240"/>
    </cofactor>
</comment>
<comment type="subcellular location">
    <subcellularLocation>
        <location evidence="1">Cytoplasm</location>
    </subcellularLocation>
</comment>
<comment type="similarity">
    <text evidence="1">Belongs to the Maf family. YhdE subfamily.</text>
</comment>
<comment type="sequence caution" evidence="3">
    <conflict type="erroneous initiation">
        <sequence resource="EMBL-CDS" id="AAL52853"/>
    </conflict>
</comment>
<proteinExistence type="inferred from homology"/>
<feature type="chain" id="PRO_0000123001" description="dTTP/UTP pyrophosphatase">
    <location>
        <begin position="1"/>
        <end position="208"/>
    </location>
</feature>
<feature type="region of interest" description="Disordered" evidence="2">
    <location>
        <begin position="28"/>
        <end position="48"/>
    </location>
</feature>
<feature type="active site" description="Proton acceptor" evidence="1">
    <location>
        <position position="79"/>
    </location>
</feature>
<feature type="site" description="Important for substrate specificity" evidence="1">
    <location>
        <position position="15"/>
    </location>
</feature>
<feature type="site" description="Important for substrate specificity" evidence="1">
    <location>
        <position position="80"/>
    </location>
</feature>
<feature type="site" description="Important for substrate specificity" evidence="1">
    <location>
        <position position="163"/>
    </location>
</feature>
<reference key="1">
    <citation type="journal article" date="2002" name="Proc. Natl. Acad. Sci. U.S.A.">
        <title>The genome sequence of the facultative intracellular pathogen Brucella melitensis.</title>
        <authorList>
            <person name="DelVecchio V.G."/>
            <person name="Kapatral V."/>
            <person name="Redkar R.J."/>
            <person name="Patra G."/>
            <person name="Mujer C."/>
            <person name="Los T."/>
            <person name="Ivanova N."/>
            <person name="Anderson I."/>
            <person name="Bhattacharyya A."/>
            <person name="Lykidis A."/>
            <person name="Reznik G."/>
            <person name="Jablonski L."/>
            <person name="Larsen N."/>
            <person name="D'Souza M."/>
            <person name="Bernal A."/>
            <person name="Mazur M."/>
            <person name="Goltsman E."/>
            <person name="Selkov E."/>
            <person name="Elzer P.H."/>
            <person name="Hagius S."/>
            <person name="O'Callaghan D."/>
            <person name="Letesson J.-J."/>
            <person name="Haselkorn R."/>
            <person name="Kyrpides N.C."/>
            <person name="Overbeek R."/>
        </authorList>
    </citation>
    <scope>NUCLEOTIDE SEQUENCE [LARGE SCALE GENOMIC DNA]</scope>
    <source>
        <strain>ATCC 23456 / CCUG 17765 / NCTC 10094 / 16M</strain>
    </source>
</reference>
<name>NTPPA_BRUME</name>
<organism>
    <name type="scientific">Brucella melitensis biotype 1 (strain ATCC 23456 / CCUG 17765 / NCTC 10094 / 16M)</name>
    <dbReference type="NCBI Taxonomy" id="224914"/>
    <lineage>
        <taxon>Bacteria</taxon>
        <taxon>Pseudomonadati</taxon>
        <taxon>Pseudomonadota</taxon>
        <taxon>Alphaproteobacteria</taxon>
        <taxon>Hyphomicrobiales</taxon>
        <taxon>Brucellaceae</taxon>
        <taxon>Brucella/Ochrobactrum group</taxon>
        <taxon>Brucella</taxon>
    </lineage>
</organism>
<accession>Q8YF55</accession>
<gene>
    <name type="ordered locus">BMEI1672</name>
</gene>
<dbReference type="EC" id="3.6.1.9" evidence="1"/>
<dbReference type="EMBL" id="AE008917">
    <property type="protein sequence ID" value="AAL52853.1"/>
    <property type="status" value="ALT_INIT"/>
    <property type="molecule type" value="Genomic_DNA"/>
</dbReference>
<dbReference type="PIR" id="AB3461">
    <property type="entry name" value="AB3461"/>
</dbReference>
<dbReference type="RefSeq" id="WP_002965530.1">
    <property type="nucleotide sequence ID" value="NZ_GG703778.1"/>
</dbReference>
<dbReference type="SMR" id="Q8YF55"/>
<dbReference type="KEGG" id="bme:BMEI1672"/>
<dbReference type="KEGG" id="bmel:DK63_1818"/>
<dbReference type="PATRIC" id="fig|224914.52.peg.1919"/>
<dbReference type="eggNOG" id="COG0424">
    <property type="taxonomic scope" value="Bacteria"/>
</dbReference>
<dbReference type="PhylomeDB" id="Q8YF55"/>
<dbReference type="Proteomes" id="UP000000419">
    <property type="component" value="Chromosome I"/>
</dbReference>
<dbReference type="GO" id="GO:0005737">
    <property type="term" value="C:cytoplasm"/>
    <property type="evidence" value="ECO:0007669"/>
    <property type="project" value="UniProtKB-SubCell"/>
</dbReference>
<dbReference type="GO" id="GO:0036218">
    <property type="term" value="F:dTTP diphosphatase activity"/>
    <property type="evidence" value="ECO:0007669"/>
    <property type="project" value="RHEA"/>
</dbReference>
<dbReference type="GO" id="GO:0036221">
    <property type="term" value="F:UTP diphosphatase activity"/>
    <property type="evidence" value="ECO:0007669"/>
    <property type="project" value="RHEA"/>
</dbReference>
<dbReference type="GO" id="GO:0009117">
    <property type="term" value="P:nucleotide metabolic process"/>
    <property type="evidence" value="ECO:0007669"/>
    <property type="project" value="UniProtKB-KW"/>
</dbReference>
<dbReference type="CDD" id="cd00555">
    <property type="entry name" value="Maf"/>
    <property type="match status" value="1"/>
</dbReference>
<dbReference type="Gene3D" id="3.90.950.10">
    <property type="match status" value="1"/>
</dbReference>
<dbReference type="HAMAP" id="MF_00528">
    <property type="entry name" value="Maf"/>
    <property type="match status" value="1"/>
</dbReference>
<dbReference type="InterPro" id="IPR029001">
    <property type="entry name" value="ITPase-like_fam"/>
</dbReference>
<dbReference type="InterPro" id="IPR003697">
    <property type="entry name" value="Maf-like"/>
</dbReference>
<dbReference type="NCBIfam" id="TIGR00172">
    <property type="entry name" value="maf"/>
    <property type="match status" value="1"/>
</dbReference>
<dbReference type="NCBIfam" id="NF002401">
    <property type="entry name" value="PRK01441.1"/>
    <property type="match status" value="1"/>
</dbReference>
<dbReference type="PANTHER" id="PTHR43213">
    <property type="entry name" value="BIFUNCTIONAL DTTP/UTP PYROPHOSPHATASE/METHYLTRANSFERASE PROTEIN-RELATED"/>
    <property type="match status" value="1"/>
</dbReference>
<dbReference type="PANTHER" id="PTHR43213:SF5">
    <property type="entry name" value="BIFUNCTIONAL DTTP_UTP PYROPHOSPHATASE_METHYLTRANSFERASE PROTEIN-RELATED"/>
    <property type="match status" value="1"/>
</dbReference>
<dbReference type="Pfam" id="PF02545">
    <property type="entry name" value="Maf"/>
    <property type="match status" value="1"/>
</dbReference>
<dbReference type="PIRSF" id="PIRSF006305">
    <property type="entry name" value="Maf"/>
    <property type="match status" value="1"/>
</dbReference>
<dbReference type="SUPFAM" id="SSF52972">
    <property type="entry name" value="ITPase-like"/>
    <property type="match status" value="1"/>
</dbReference>
<evidence type="ECO:0000255" key="1">
    <source>
        <dbReference type="HAMAP-Rule" id="MF_00528"/>
    </source>
</evidence>
<evidence type="ECO:0000256" key="2">
    <source>
        <dbReference type="SAM" id="MobiDB-lite"/>
    </source>
</evidence>
<evidence type="ECO:0000305" key="3"/>
<protein>
    <recommendedName>
        <fullName evidence="1">dTTP/UTP pyrophosphatase</fullName>
        <shortName evidence="1">dTTPase/UTPase</shortName>
        <ecNumber evidence="1">3.6.1.9</ecNumber>
    </recommendedName>
    <alternativeName>
        <fullName evidence="1">Nucleoside triphosphate pyrophosphatase</fullName>
    </alternativeName>
    <alternativeName>
        <fullName evidence="1">Nucleotide pyrophosphatase</fullName>
        <shortName evidence="1">Nucleotide PPase</shortName>
    </alternativeName>
</protein>
<keyword id="KW-0963">Cytoplasm</keyword>
<keyword id="KW-0378">Hydrolase</keyword>
<keyword id="KW-0546">Nucleotide metabolism</keyword>